<gene>
    <name evidence="4" type="primary">RXLR54</name>
</gene>
<organism>
    <name type="scientific">Plasmopara viticola</name>
    <name type="common">Downy mildew of grapevine</name>
    <name type="synonym">Botrytis viticola</name>
    <dbReference type="NCBI Taxonomy" id="143451"/>
    <lineage>
        <taxon>Eukaryota</taxon>
        <taxon>Sar</taxon>
        <taxon>Stramenopiles</taxon>
        <taxon>Oomycota</taxon>
        <taxon>Peronosporales</taxon>
        <taxon>Peronosporaceae</taxon>
        <taxon>Plasmopara</taxon>
    </lineage>
</organism>
<sequence length="104" mass="11197">MIFTLLGLALVATKSACIAHVFILQLGALDMEALATPLAKVIATSARALHTRSLRASERDKCTNLTARSTRALLAHGPRLRHAVQQQAVAALFTIAVARRRRTA</sequence>
<dbReference type="GlyCosmos" id="P0CV17">
    <property type="glycosylation" value="1 site, No reported glycans"/>
</dbReference>
<dbReference type="GO" id="GO:0005576">
    <property type="term" value="C:extracellular region"/>
    <property type="evidence" value="ECO:0007669"/>
    <property type="project" value="UniProtKB-SubCell"/>
</dbReference>
<dbReference type="GO" id="GO:0033650">
    <property type="term" value="C:host cell mitochondrion"/>
    <property type="evidence" value="ECO:0007669"/>
    <property type="project" value="UniProtKB-SubCell"/>
</dbReference>
<dbReference type="GO" id="GO:0042025">
    <property type="term" value="C:host cell nucleus"/>
    <property type="evidence" value="ECO:0007669"/>
    <property type="project" value="UniProtKB-SubCell"/>
</dbReference>
<accession>P0CV17</accession>
<reference key="1">
    <citation type="journal article" date="2018" name="Front. Plant Sci.">
        <title>In planta functional analysis and subcellular localization of the oomycete pathogen Plasmopara viticola candidate RXLR effector repertoire.</title>
        <authorList>
            <person name="Liu Y."/>
            <person name="Lan X."/>
            <person name="Song S."/>
            <person name="Yin L."/>
            <person name="Dry I.B."/>
            <person name="Qu J."/>
            <person name="Xiang J."/>
            <person name="Lu J."/>
        </authorList>
    </citation>
    <scope>NUCLEOTIDE SEQUENCE [MRNA]</scope>
    <scope>DOMAIN</scope>
    <scope>FUNCTION</scope>
    <scope>SUBCELLULAR LOCATION</scope>
</reference>
<name>RLR54_PLAVT</name>
<evidence type="ECO:0000255" key="1"/>
<evidence type="ECO:0000255" key="2">
    <source>
        <dbReference type="PROSITE-ProRule" id="PRU00498"/>
    </source>
</evidence>
<evidence type="ECO:0000269" key="3">
    <source>
    </source>
</evidence>
<evidence type="ECO:0000303" key="4">
    <source>
    </source>
</evidence>
<evidence type="ECO:0000305" key="5"/>
<evidence type="ECO:0000305" key="6">
    <source>
    </source>
</evidence>
<keyword id="KW-0325">Glycoprotein</keyword>
<keyword id="KW-1035">Host cytoplasm</keyword>
<keyword id="KW-1045">Host mitochondrion</keyword>
<keyword id="KW-1048">Host nucleus</keyword>
<keyword id="KW-0964">Secreted</keyword>
<keyword id="KW-0732">Signal</keyword>
<keyword id="KW-0843">Virulence</keyword>
<proteinExistence type="inferred from homology"/>
<comment type="function">
    <text evidence="3">Secreted effector that completely suppresses the host cell death induced by cell death-inducing proteins.</text>
</comment>
<comment type="subcellular location">
    <subcellularLocation>
        <location evidence="3">Secreted</location>
    </subcellularLocation>
    <subcellularLocation>
        <location evidence="3">Host chloroplast envelope</location>
    </subcellularLocation>
    <subcellularLocation>
        <location evidence="3">Host mitochondrion</location>
    </subcellularLocation>
    <subcellularLocation>
        <location evidence="3">Host nucleus</location>
    </subcellularLocation>
    <subcellularLocation>
        <location>Host cytoplasm</location>
    </subcellularLocation>
</comment>
<comment type="domain">
    <text evidence="6">Has the canonical translocation RxLR motif, but lacks the canonical EER motif, which characterizes most oomycete effectors identified so far.</text>
</comment>
<comment type="similarity">
    <text evidence="5">Belongs to the RxLR effector family.</text>
</comment>
<protein>
    <recommendedName>
        <fullName evidence="4">Secreted RxLR effector protein 54</fullName>
    </recommendedName>
</protein>
<feature type="signal peptide" evidence="1">
    <location>
        <begin position="1"/>
        <end position="19"/>
    </location>
</feature>
<feature type="chain" id="PRO_0000447926" description="Secreted RxLR effector protein 54">
    <location>
        <begin position="20"/>
        <end position="104"/>
    </location>
</feature>
<feature type="short sequence motif" description="RxLR" evidence="6">
    <location>
        <begin position="52"/>
        <end position="55"/>
    </location>
</feature>
<feature type="glycosylation site" description="N-linked (GlcNAc...) asparagine" evidence="2">
    <location>
        <position position="64"/>
    </location>
</feature>